<keyword id="KW-0489">Methyltransferase</keyword>
<keyword id="KW-0506">mRNA capping</keyword>
<keyword id="KW-0507">mRNA processing</keyword>
<keyword id="KW-0539">Nucleus</keyword>
<keyword id="KW-1185">Reference proteome</keyword>
<keyword id="KW-0949">S-adenosyl-L-methionine</keyword>
<keyword id="KW-0808">Transferase</keyword>
<reference key="1">
    <citation type="submission" date="2003-01" db="EMBL/GenBank/DDBJ databases">
        <authorList>
            <consortium name="NIH - Zebrafish Gene Collection (ZGC) project"/>
        </authorList>
    </citation>
    <scope>NUCLEOTIDE SEQUENCE [LARGE SCALE MRNA]</scope>
    <source>
        <strain>AB</strain>
    </source>
</reference>
<dbReference type="EC" id="2.1.1.57" evidence="1"/>
<dbReference type="EMBL" id="BC044371">
    <property type="protein sequence ID" value="AAH44371.1"/>
    <property type="molecule type" value="mRNA"/>
</dbReference>
<dbReference type="RefSeq" id="NP_956427.1">
    <property type="nucleotide sequence ID" value="NM_200133.1"/>
</dbReference>
<dbReference type="SMR" id="Q803R5"/>
<dbReference type="BioGRID" id="89260">
    <property type="interactions" value="1"/>
</dbReference>
<dbReference type="FunCoup" id="Q803R5">
    <property type="interactions" value="3145"/>
</dbReference>
<dbReference type="STRING" id="7955.ENSDARP00000049372"/>
<dbReference type="PaxDb" id="7955-ENSDARP00000049372"/>
<dbReference type="GeneID" id="393102"/>
<dbReference type="KEGG" id="dre:393102"/>
<dbReference type="AGR" id="ZFIN:ZDB-GENE-040426-696"/>
<dbReference type="CTD" id="23070"/>
<dbReference type="ZFIN" id="ZDB-GENE-040426-696">
    <property type="gene designation" value="cmtr1"/>
</dbReference>
<dbReference type="eggNOG" id="KOG3673">
    <property type="taxonomic scope" value="Eukaryota"/>
</dbReference>
<dbReference type="InParanoid" id="Q803R5"/>
<dbReference type="OrthoDB" id="10251234at2759"/>
<dbReference type="PhylomeDB" id="Q803R5"/>
<dbReference type="PRO" id="PR:Q803R5"/>
<dbReference type="Proteomes" id="UP000000437">
    <property type="component" value="Chromosome 23"/>
</dbReference>
<dbReference type="GO" id="GO:0005737">
    <property type="term" value="C:cytoplasm"/>
    <property type="evidence" value="ECO:0000318"/>
    <property type="project" value="GO_Central"/>
</dbReference>
<dbReference type="GO" id="GO:0005634">
    <property type="term" value="C:nucleus"/>
    <property type="evidence" value="ECO:0000250"/>
    <property type="project" value="UniProtKB"/>
</dbReference>
<dbReference type="GO" id="GO:0004483">
    <property type="term" value="F:mRNA (nucleoside-2'-O-)-methyltransferase activity"/>
    <property type="evidence" value="ECO:0000250"/>
    <property type="project" value="UniProtKB"/>
</dbReference>
<dbReference type="GO" id="GO:0003676">
    <property type="term" value="F:nucleic acid binding"/>
    <property type="evidence" value="ECO:0007669"/>
    <property type="project" value="InterPro"/>
</dbReference>
<dbReference type="GO" id="GO:0006370">
    <property type="term" value="P:7-methylguanosine mRNA capping"/>
    <property type="evidence" value="ECO:0000250"/>
    <property type="project" value="UniProtKB"/>
</dbReference>
<dbReference type="GO" id="GO:0032259">
    <property type="term" value="P:methylation"/>
    <property type="evidence" value="ECO:0007669"/>
    <property type="project" value="UniProtKB-KW"/>
</dbReference>
<dbReference type="GO" id="GO:0006397">
    <property type="term" value="P:mRNA processing"/>
    <property type="evidence" value="ECO:0000250"/>
    <property type="project" value="UniProtKB"/>
</dbReference>
<dbReference type="CDD" id="cd00201">
    <property type="entry name" value="WW"/>
    <property type="match status" value="1"/>
</dbReference>
<dbReference type="FunFam" id="3.30.470.30:FF:000006">
    <property type="entry name" value="Cap methyltransferase 1"/>
    <property type="match status" value="1"/>
</dbReference>
<dbReference type="FunFam" id="3.40.50.12760:FF:000001">
    <property type="entry name" value="Cap methyltransferase 1"/>
    <property type="match status" value="1"/>
</dbReference>
<dbReference type="Gene3D" id="2.20.70.10">
    <property type="match status" value="1"/>
</dbReference>
<dbReference type="Gene3D" id="3.40.50.12760">
    <property type="match status" value="1"/>
</dbReference>
<dbReference type="Gene3D" id="3.30.470.30">
    <property type="entry name" value="DNA ligase/mRNA capping enzyme"/>
    <property type="match status" value="1"/>
</dbReference>
<dbReference type="InterPro" id="IPR000467">
    <property type="entry name" value="G_patch_dom"/>
</dbReference>
<dbReference type="InterPro" id="IPR050851">
    <property type="entry name" value="mRNA_Cap_2O-Ribose_MeTrfase"/>
</dbReference>
<dbReference type="InterPro" id="IPR002877">
    <property type="entry name" value="RNA_MeTrfase_FtsJ_dom"/>
</dbReference>
<dbReference type="InterPro" id="IPR025816">
    <property type="entry name" value="RrmJ-type_MeTrfase"/>
</dbReference>
<dbReference type="InterPro" id="IPR029063">
    <property type="entry name" value="SAM-dependent_MTases_sf"/>
</dbReference>
<dbReference type="InterPro" id="IPR001202">
    <property type="entry name" value="WW_dom"/>
</dbReference>
<dbReference type="PANTHER" id="PTHR16121:SF0">
    <property type="entry name" value="CAP-SPECIFIC MRNA (NUCLEOSIDE-2'-O-)-METHYLTRANSFERASE 1"/>
    <property type="match status" value="1"/>
</dbReference>
<dbReference type="PANTHER" id="PTHR16121">
    <property type="entry name" value="CAP-SPECIFIC MRNA (NUCLEOSIDE-2'-O-)-METHYLTRANSFERASE 1-RELATED"/>
    <property type="match status" value="1"/>
</dbReference>
<dbReference type="Pfam" id="PF01728">
    <property type="entry name" value="FtsJ"/>
    <property type="match status" value="1"/>
</dbReference>
<dbReference type="Pfam" id="PF01585">
    <property type="entry name" value="G-patch"/>
    <property type="match status" value="1"/>
</dbReference>
<dbReference type="Pfam" id="PF00397">
    <property type="entry name" value="WW"/>
    <property type="match status" value="1"/>
</dbReference>
<dbReference type="SMART" id="SM00443">
    <property type="entry name" value="G_patch"/>
    <property type="match status" value="1"/>
</dbReference>
<dbReference type="SMART" id="SM00456">
    <property type="entry name" value="WW"/>
    <property type="match status" value="1"/>
</dbReference>
<dbReference type="SUPFAM" id="SSF56091">
    <property type="entry name" value="DNA ligase/mRNA capping enzyme, catalytic domain"/>
    <property type="match status" value="1"/>
</dbReference>
<dbReference type="SUPFAM" id="SSF53335">
    <property type="entry name" value="S-adenosyl-L-methionine-dependent methyltransferases"/>
    <property type="match status" value="1"/>
</dbReference>
<dbReference type="PROSITE" id="PS50174">
    <property type="entry name" value="G_PATCH"/>
    <property type="match status" value="1"/>
</dbReference>
<dbReference type="PROSITE" id="PS51613">
    <property type="entry name" value="SAM_MT_RRMJ"/>
    <property type="match status" value="1"/>
</dbReference>
<dbReference type="PROSITE" id="PS01159">
    <property type="entry name" value="WW_DOMAIN_1"/>
    <property type="match status" value="1"/>
</dbReference>
<dbReference type="PROSITE" id="PS50020">
    <property type="entry name" value="WW_DOMAIN_2"/>
    <property type="match status" value="1"/>
</dbReference>
<proteinExistence type="evidence at transcript level"/>
<accession>Q803R5</accession>
<organism>
    <name type="scientific">Danio rerio</name>
    <name type="common">Zebrafish</name>
    <name type="synonym">Brachydanio rerio</name>
    <dbReference type="NCBI Taxonomy" id="7955"/>
    <lineage>
        <taxon>Eukaryota</taxon>
        <taxon>Metazoa</taxon>
        <taxon>Chordata</taxon>
        <taxon>Craniata</taxon>
        <taxon>Vertebrata</taxon>
        <taxon>Euteleostomi</taxon>
        <taxon>Actinopterygii</taxon>
        <taxon>Neopterygii</taxon>
        <taxon>Teleostei</taxon>
        <taxon>Ostariophysi</taxon>
        <taxon>Cypriniformes</taxon>
        <taxon>Danionidae</taxon>
        <taxon>Danioninae</taxon>
        <taxon>Danio</taxon>
    </lineage>
</organism>
<name>CMTR1_DANRE</name>
<comment type="function">
    <text evidence="1">S-adenosyl-L-methionine-dependent methyltransferase that mediates mRNA cap1 2'-O-ribose methylation to the 5'-cap structure of mRNAs. Methylates the ribose of the first nucleotide of a m(7)GpppG-capped mRNA and small nuclear RNA (snRNA) to produce m(7)GpppRm (cap1). Displays a preference for cap0 transcripts. Cap1 modification is linked to higher levels of translation. May be involved in the interferon response pathway.</text>
</comment>
<comment type="catalytic activity">
    <reaction evidence="1">
        <text>a 5'-end (N(7)-methyl 5'-triphosphoguanosine)-ribonucleoside in mRNA + S-adenosyl-L-methionine = a 5'-end (N(7)-methyl 5'-triphosphoguanosine)-(2'-O-methyl-ribonucleoside) in mRNA + S-adenosyl-L-homocysteine + H(+)</text>
        <dbReference type="Rhea" id="RHEA:67020"/>
        <dbReference type="Rhea" id="RHEA-COMP:17167"/>
        <dbReference type="Rhea" id="RHEA-COMP:17168"/>
        <dbReference type="ChEBI" id="CHEBI:15378"/>
        <dbReference type="ChEBI" id="CHEBI:57856"/>
        <dbReference type="ChEBI" id="CHEBI:59789"/>
        <dbReference type="ChEBI" id="CHEBI:156461"/>
        <dbReference type="ChEBI" id="CHEBI:167609"/>
        <dbReference type="EC" id="2.1.1.57"/>
    </reaction>
</comment>
<comment type="subcellular location">
    <subcellularLocation>
        <location evidence="1">Nucleus</location>
    </subcellularLocation>
</comment>
<feature type="chain" id="PRO_0000251243" description="Cap-specific mRNA (nucleoside-2'-O-)-methyltransferase 1">
    <location>
        <begin position="1"/>
        <end position="829"/>
    </location>
</feature>
<feature type="domain" description="G-patch" evidence="2">
    <location>
        <begin position="79"/>
        <end position="125"/>
    </location>
</feature>
<feature type="domain" description="RrmJ-type SAM-dependent 2'-O-MTase" evidence="5">
    <location>
        <begin position="223"/>
        <end position="442"/>
    </location>
</feature>
<feature type="domain" description="WW" evidence="3">
    <location>
        <begin position="745"/>
        <end position="779"/>
    </location>
</feature>
<feature type="region of interest" description="Disordered" evidence="6">
    <location>
        <begin position="1"/>
        <end position="68"/>
    </location>
</feature>
<feature type="short sequence motif" description="Bipartite nuclear localization signal" evidence="4">
    <location>
        <begin position="2"/>
        <end position="16"/>
    </location>
</feature>
<feature type="compositionally biased region" description="Low complexity" evidence="6">
    <location>
        <begin position="31"/>
        <end position="44"/>
    </location>
</feature>
<feature type="compositionally biased region" description="Polar residues" evidence="6">
    <location>
        <begin position="55"/>
        <end position="68"/>
    </location>
</feature>
<feature type="active site" evidence="1">
    <location>
        <position position="231"/>
    </location>
</feature>
<feature type="active site" evidence="1">
    <location>
        <position position="356"/>
    </location>
</feature>
<feature type="active site" description="Proton acceptor" evidence="5">
    <location>
        <position position="396"/>
    </location>
</feature>
<feature type="binding site" evidence="1">
    <location>
        <begin position="195"/>
        <end position="199"/>
    </location>
    <ligand>
        <name>substrate</name>
    </ligand>
</feature>
<feature type="binding site" evidence="1">
    <location>
        <position position="210"/>
    </location>
    <ligand>
        <name>substrate</name>
    </ligand>
</feature>
<feature type="binding site" evidence="1">
    <location>
        <position position="226"/>
    </location>
    <ligand>
        <name>S-adenosyl-L-methionine</name>
        <dbReference type="ChEBI" id="CHEBI:59789"/>
    </ligand>
</feature>
<feature type="binding site" evidence="1">
    <location>
        <begin position="269"/>
        <end position="275"/>
    </location>
    <ligand>
        <name>S-adenosyl-L-methionine</name>
        <dbReference type="ChEBI" id="CHEBI:59789"/>
    </ligand>
</feature>
<feature type="binding site" evidence="1">
    <location>
        <begin position="327"/>
        <end position="328"/>
    </location>
    <ligand>
        <name>S-adenosyl-L-methionine</name>
        <dbReference type="ChEBI" id="CHEBI:59789"/>
    </ligand>
</feature>
<feature type="binding site" evidence="1">
    <location>
        <begin position="366"/>
        <end position="368"/>
    </location>
    <ligand>
        <name>substrate</name>
    </ligand>
</feature>
<feature type="binding site" evidence="1">
    <location>
        <position position="431"/>
    </location>
    <ligand>
        <name>substrate</name>
    </ligand>
</feature>
<gene>
    <name type="primary">cmtr1</name>
    <name type="synonym">ftsjd2</name>
    <name type="ORF">zgc:55336</name>
</gene>
<evidence type="ECO:0000250" key="1">
    <source>
        <dbReference type="UniProtKB" id="Q8N1G2"/>
    </source>
</evidence>
<evidence type="ECO:0000255" key="2">
    <source>
        <dbReference type="PROSITE-ProRule" id="PRU00092"/>
    </source>
</evidence>
<evidence type="ECO:0000255" key="3">
    <source>
        <dbReference type="PROSITE-ProRule" id="PRU00224"/>
    </source>
</evidence>
<evidence type="ECO:0000255" key="4">
    <source>
        <dbReference type="PROSITE-ProRule" id="PRU00768"/>
    </source>
</evidence>
<evidence type="ECO:0000255" key="5">
    <source>
        <dbReference type="PROSITE-ProRule" id="PRU00945"/>
    </source>
</evidence>
<evidence type="ECO:0000256" key="6">
    <source>
        <dbReference type="SAM" id="MobiDB-lite"/>
    </source>
</evidence>
<sequence>MKRAAQASDEPLKKRKTAREESSDEDEESSQRTTSQDSSQSESLSDVEDHKPSFSRPSDSQNSQGSMAHNEASNKFAMYNNVSQKLMAKMGFREGEGLGKYGQGRKEIVEASTQRGRRGLGLMLKGFQGDLNVDWEDEPEPSAIEQVSWFPESSPEIPDSDELRDWMTIGEKKLKIDDEIEFCSENLLHLLLRCKTVFDDLEGEEMRRARTRSNPYETIRGAFFLNRAAMKMANMDHVFDYMFTNPKDSQGKVLTRDKEGELLYFGDVCAGPGGFSEYVLWRRRWHAKGFGMTLKGANDFKLEDFYAAPSELFEAYYGEGGIDGDGDITRPENISAFRNFVLDSTEGRGLHFLMADGGFSVEGQENLQEILSKQLLLCQFLTALSVVRPGGHFLCKTFDLFTPFSVGLIYLLYLCFERVSLFKPVTSRPANSERYVVCKGLKPGTDAVREYMFTINLKLNQFRHSDRDVIEVVPLDIIKGDTDFFQYMIGSNESYCAVQIKALAKIHAYVRDTTLFEARQADIRKECLKLWGIPDKARVTPSTSDPKNKFYELVKGSEMDSFNSRPTALNSVNLEKLQHVLDYRCIVGGGEQLFLLALGRSQIYTWDGKAPSRWKKLENFKMELPRDTLLSVEIVQELKGEGKAQRRINAVHVLDALVLNGTDVRDQHFNQRIQMVEKFVKAVSKPSRPDMNPIRVKEVYRLEEMEKIFVRLEMKITKSSGGMPRLSYTGRDDRHFLPTGLYIIKTVNDPWTMAFSKSSKRKFFYNKQTKESTYDLPATSVAPFYVCHQDRLFWAWEEGVRVHDSQTRINPDKLSKDDVVSFIHKHYQQ</sequence>
<protein>
    <recommendedName>
        <fullName>Cap-specific mRNA (nucleoside-2'-O-)-methyltransferase 1</fullName>
        <ecNumber evidence="1">2.1.1.57</ecNumber>
    </recommendedName>
    <alternativeName>
        <fullName>Cap methyltransferase 1</fullName>
    </alternativeName>
    <alternativeName>
        <fullName>Cap1 2'O-ribose methyltransferase 1</fullName>
        <shortName>MTr1</shortName>
    </alternativeName>
    <alternativeName>
        <fullName>FtsJ methyltransferase domain-containing protein 2</fullName>
    </alternativeName>
</protein>